<evidence type="ECO:0000250" key="1">
    <source>
        <dbReference type="UniProtKB" id="Q9H8P0"/>
    </source>
</evidence>
<evidence type="ECO:0000255" key="2"/>
<evidence type="ECO:0000305" key="3"/>
<gene>
    <name type="primary">srd5a3</name>
    <name type="ORF">si:ch211-278f21.3</name>
</gene>
<feature type="chain" id="PRO_0000398651" description="Polyprenal reductase">
    <location>
        <begin position="1"/>
        <end position="309"/>
    </location>
</feature>
<feature type="topological domain" description="Cytoplasmic" evidence="2">
    <location>
        <begin position="1"/>
        <end position="3"/>
    </location>
</feature>
<feature type="transmembrane region" description="Helical" evidence="2">
    <location>
        <begin position="4"/>
        <end position="24"/>
    </location>
</feature>
<feature type="topological domain" description="Lumenal" evidence="2">
    <location>
        <begin position="25"/>
        <end position="67"/>
    </location>
</feature>
<feature type="transmembrane region" description="Helical" evidence="2">
    <location>
        <begin position="68"/>
        <end position="88"/>
    </location>
</feature>
<feature type="topological domain" description="Cytoplasmic" evidence="2">
    <location>
        <begin position="89"/>
        <end position="114"/>
    </location>
</feature>
<feature type="transmembrane region" description="Helical" evidence="2">
    <location>
        <begin position="115"/>
        <end position="135"/>
    </location>
</feature>
<feature type="topological domain" description="Lumenal" evidence="2">
    <location>
        <begin position="136"/>
        <end position="150"/>
    </location>
</feature>
<feature type="transmembrane region" description="Helical" evidence="2">
    <location>
        <begin position="151"/>
        <end position="171"/>
    </location>
</feature>
<feature type="topological domain" description="Cytoplasmic" evidence="2">
    <location>
        <begin position="172"/>
        <end position="185"/>
    </location>
</feature>
<feature type="transmembrane region" description="Helical" evidence="2">
    <location>
        <begin position="186"/>
        <end position="206"/>
    </location>
</feature>
<feature type="topological domain" description="Lumenal" evidence="2">
    <location>
        <begin position="207"/>
        <end position="255"/>
    </location>
</feature>
<feature type="transmembrane region" description="Helical" evidence="2">
    <location>
        <begin position="256"/>
        <end position="276"/>
    </location>
</feature>
<feature type="topological domain" description="Cytoplasmic" evidence="2">
    <location>
        <begin position="277"/>
        <end position="309"/>
    </location>
</feature>
<feature type="sequence conflict" description="In Ref. 2; AAI33965." evidence="3" ref="2">
    <original>F</original>
    <variation>S</variation>
    <location>
        <position position="69"/>
    </location>
</feature>
<sequence length="309" mass="35708">MFHILSIVNIIWLLLALCFGAAFCLNKFSVKLPNRVEHVFQDFIRYGKTKENIKRASWQLVFDLSKRYFYHFYVVSVMWNGLLLLFSIRSVVMSEAFPDWIIDVLGSLTGRSRGAWNEIHLSTLLLQVLLWVHTLRRLLECLFVSVFSDGVINVVQYAFGLSYYIILGLTVLCTNDSLPQSESVSFFNQLTWYHVVGTLLFFWASFLQHQSLSLLAKMRTDSSGKVETLAHKMPCGGWFELVSCPHYLAELLIYAAMCVCCGCASLTWWMVVLYVLCNQALAAQLCHEYYRSKFKTYPHHRKAFIPFVL</sequence>
<protein>
    <recommendedName>
        <fullName evidence="3">Polyprenal reductase</fullName>
        <ecNumber evidence="1">1.3.1.94</ecNumber>
    </recommendedName>
    <alternativeName>
        <fullName>3-oxo-5-alpha-steroid 4-dehydrogenase 3</fullName>
        <ecNumber evidence="1">1.3.1.22</ecNumber>
    </alternativeName>
    <alternativeName>
        <fullName>Steroid 5-alpha-reductase 3</fullName>
        <shortName>S5AR 3</shortName>
        <shortName>SR type 3</shortName>
    </alternativeName>
</protein>
<keyword id="KW-0256">Endoplasmic reticulum</keyword>
<keyword id="KW-0443">Lipid metabolism</keyword>
<keyword id="KW-0472">Membrane</keyword>
<keyword id="KW-0521">NADP</keyword>
<keyword id="KW-0560">Oxidoreductase</keyword>
<keyword id="KW-1185">Reference proteome</keyword>
<keyword id="KW-0812">Transmembrane</keyword>
<keyword id="KW-1133">Transmembrane helix</keyword>
<accession>Q5RIU9</accession>
<accession>A4FVI8</accession>
<organism>
    <name type="scientific">Danio rerio</name>
    <name type="common">Zebrafish</name>
    <name type="synonym">Brachydanio rerio</name>
    <dbReference type="NCBI Taxonomy" id="7955"/>
    <lineage>
        <taxon>Eukaryota</taxon>
        <taxon>Metazoa</taxon>
        <taxon>Chordata</taxon>
        <taxon>Craniata</taxon>
        <taxon>Vertebrata</taxon>
        <taxon>Euteleostomi</taxon>
        <taxon>Actinopterygii</taxon>
        <taxon>Neopterygii</taxon>
        <taxon>Teleostei</taxon>
        <taxon>Ostariophysi</taxon>
        <taxon>Cypriniformes</taxon>
        <taxon>Danionidae</taxon>
        <taxon>Danioninae</taxon>
        <taxon>Danio</taxon>
    </lineage>
</organism>
<comment type="function">
    <text evidence="1">Plays a key role in early steps of protein N-linked glycosylation by being involved in the conversion of polyprenol into dolichol (By similarity). Acts as a polyprenal reductase that mediates the reduction of polyprenal into dolichal in a NADP-dependent mechanism (By similarity). Dolichols are required for the synthesis of dolichol-linked monosaccharides and the oligosaccharide precursor used for N-glycosylation (By similarity). Also able to convert testosterone (T) into 5-alpha-dihydrotestosterone (DHT) (By similarity).</text>
</comment>
<comment type="catalytic activity">
    <reaction evidence="1">
        <text>a di-trans,poly-cis-dolichal + NADP(+) = a di-trans,poly-cis-polyprenal + NADPH + H(+)</text>
        <dbReference type="Rhea" id="RHEA:80727"/>
        <dbReference type="Rhea" id="RHEA-COMP:19536"/>
        <dbReference type="Rhea" id="RHEA-COMP:19537"/>
        <dbReference type="ChEBI" id="CHEBI:15378"/>
        <dbReference type="ChEBI" id="CHEBI:57783"/>
        <dbReference type="ChEBI" id="CHEBI:58349"/>
        <dbReference type="ChEBI" id="CHEBI:231623"/>
        <dbReference type="ChEBI" id="CHEBI:231637"/>
        <dbReference type="EC" id="1.3.1.94"/>
    </reaction>
    <physiologicalReaction direction="right-to-left" evidence="1">
        <dbReference type="Rhea" id="RHEA:80729"/>
    </physiologicalReaction>
</comment>
<comment type="catalytic activity">
    <reaction evidence="1">
        <text>a 3-oxo-5alpha-steroid + NADP(+) = a 3-oxo-Delta(4)-steroid + NADPH + H(+)</text>
        <dbReference type="Rhea" id="RHEA:54384"/>
        <dbReference type="ChEBI" id="CHEBI:13601"/>
        <dbReference type="ChEBI" id="CHEBI:15378"/>
        <dbReference type="ChEBI" id="CHEBI:47909"/>
        <dbReference type="ChEBI" id="CHEBI:57783"/>
        <dbReference type="ChEBI" id="CHEBI:58349"/>
        <dbReference type="EC" id="1.3.1.22"/>
    </reaction>
    <physiologicalReaction direction="right-to-left" evidence="1">
        <dbReference type="Rhea" id="RHEA:54386"/>
    </physiologicalReaction>
</comment>
<comment type="catalytic activity">
    <reaction evidence="1">
        <text>androst-4-ene-3,17-dione + NADPH + H(+) = 5alpha-androstan-3,17-dione + NADP(+)</text>
        <dbReference type="Rhea" id="RHEA:50816"/>
        <dbReference type="ChEBI" id="CHEBI:15378"/>
        <dbReference type="ChEBI" id="CHEBI:15994"/>
        <dbReference type="ChEBI" id="CHEBI:16422"/>
        <dbReference type="ChEBI" id="CHEBI:57783"/>
        <dbReference type="ChEBI" id="CHEBI:58349"/>
    </reaction>
    <physiologicalReaction direction="right-to-left" evidence="1">
        <dbReference type="Rhea" id="RHEA:50818"/>
    </physiologicalReaction>
</comment>
<comment type="catalytic activity">
    <reaction evidence="1">
        <text>17beta-hydroxy-5alpha-androstan-3-one + NADP(+) = testosterone + NADPH + H(+)</text>
        <dbReference type="Rhea" id="RHEA:50820"/>
        <dbReference type="ChEBI" id="CHEBI:15378"/>
        <dbReference type="ChEBI" id="CHEBI:16330"/>
        <dbReference type="ChEBI" id="CHEBI:17347"/>
        <dbReference type="ChEBI" id="CHEBI:57783"/>
        <dbReference type="ChEBI" id="CHEBI:58349"/>
        <dbReference type="EC" id="1.3.1.22"/>
    </reaction>
    <physiologicalReaction direction="right-to-left" evidence="1">
        <dbReference type="Rhea" id="RHEA:50822"/>
    </physiologicalReaction>
</comment>
<comment type="pathway">
    <text evidence="1">Protein modification; protein glycosylation.</text>
</comment>
<comment type="subcellular location">
    <subcellularLocation>
        <location evidence="1">Endoplasmic reticulum membrane</location>
        <topology evidence="1">Multi-pass membrane protein</topology>
    </subcellularLocation>
</comment>
<comment type="similarity">
    <text evidence="3">Belongs to the steroid 5-alpha reductase family. Polyprenal reductase subfamily.</text>
</comment>
<dbReference type="EC" id="1.3.1.94" evidence="1"/>
<dbReference type="EC" id="1.3.1.22" evidence="1"/>
<dbReference type="EMBL" id="BX088688">
    <property type="protein sequence ID" value="CAI11971.1"/>
    <property type="molecule type" value="Genomic_DNA"/>
</dbReference>
<dbReference type="EMBL" id="BC133964">
    <property type="protein sequence ID" value="AAI33965.1"/>
    <property type="molecule type" value="mRNA"/>
</dbReference>
<dbReference type="RefSeq" id="NP_001038404.1">
    <property type="nucleotide sequence ID" value="NM_001044939.1"/>
</dbReference>
<dbReference type="SMR" id="Q5RIU9"/>
<dbReference type="FunCoup" id="Q5RIU9">
    <property type="interactions" value="816"/>
</dbReference>
<dbReference type="STRING" id="7955.ENSDARP00000063577"/>
<dbReference type="PaxDb" id="7955-ENSDARP00000063577"/>
<dbReference type="Ensembl" id="ENSDART00000063578">
    <property type="protein sequence ID" value="ENSDARP00000063577"/>
    <property type="gene ID" value="ENSDARG00000043307"/>
</dbReference>
<dbReference type="GeneID" id="560717"/>
<dbReference type="KEGG" id="dre:560717"/>
<dbReference type="AGR" id="ZFIN:ZDB-GENE-030131-7915"/>
<dbReference type="CTD" id="79644"/>
<dbReference type="ZFIN" id="ZDB-GENE-030131-7915">
    <property type="gene designation" value="srd5a3"/>
</dbReference>
<dbReference type="eggNOG" id="KOG1640">
    <property type="taxonomic scope" value="Eukaryota"/>
</dbReference>
<dbReference type="HOGENOM" id="CLU_044409_2_1_1"/>
<dbReference type="InParanoid" id="Q5RIU9"/>
<dbReference type="OMA" id="RFYETNF"/>
<dbReference type="OrthoDB" id="541710at2759"/>
<dbReference type="PhylomeDB" id="Q5RIU9"/>
<dbReference type="TreeFam" id="TF315011"/>
<dbReference type="Reactome" id="R-DRE-193048">
    <property type="pathway name" value="Androgen biosynthesis"/>
</dbReference>
<dbReference type="Reactome" id="R-DRE-446199">
    <property type="pathway name" value="Synthesis of Dolichyl-phosphate"/>
</dbReference>
<dbReference type="UniPathway" id="UPA00378"/>
<dbReference type="PRO" id="PR:Q5RIU9"/>
<dbReference type="Proteomes" id="UP000000437">
    <property type="component" value="Chromosome 20"/>
</dbReference>
<dbReference type="Bgee" id="ENSDARG00000043307">
    <property type="expression patterns" value="Expressed in ovary and 28 other cell types or tissues"/>
</dbReference>
<dbReference type="GO" id="GO:0005783">
    <property type="term" value="C:endoplasmic reticulum"/>
    <property type="evidence" value="ECO:0000250"/>
    <property type="project" value="UniProtKB"/>
</dbReference>
<dbReference type="GO" id="GO:0005789">
    <property type="term" value="C:endoplasmic reticulum membrane"/>
    <property type="evidence" value="ECO:0007669"/>
    <property type="project" value="UniProtKB-SubCell"/>
</dbReference>
<dbReference type="GO" id="GO:0047751">
    <property type="term" value="F:3-oxo-5-alpha-steroid 4-dehydrogenase (NADP+) activity"/>
    <property type="evidence" value="ECO:0000250"/>
    <property type="project" value="UniProtKB"/>
</dbReference>
<dbReference type="GO" id="GO:0016628">
    <property type="term" value="F:oxidoreductase activity, acting on the CH-CH group of donors, NAD or NADP as acceptor"/>
    <property type="evidence" value="ECO:0000250"/>
    <property type="project" value="UniProtKB"/>
</dbReference>
<dbReference type="GO" id="GO:0160198">
    <property type="term" value="F:polyprenal reductase activity"/>
    <property type="evidence" value="ECO:0000250"/>
    <property type="project" value="UniProtKB"/>
</dbReference>
<dbReference type="GO" id="GO:0102389">
    <property type="term" value="F:polyprenol reductase activity"/>
    <property type="evidence" value="ECO:0000318"/>
    <property type="project" value="GO_Central"/>
</dbReference>
<dbReference type="GO" id="GO:0019408">
    <property type="term" value="P:dolichol biosynthetic process"/>
    <property type="evidence" value="ECO:0000250"/>
    <property type="project" value="UniProtKB"/>
</dbReference>
<dbReference type="GO" id="GO:0019348">
    <property type="term" value="P:dolichol metabolic process"/>
    <property type="evidence" value="ECO:0000250"/>
    <property type="project" value="UniProtKB"/>
</dbReference>
<dbReference type="GO" id="GO:0006488">
    <property type="term" value="P:dolichol-linked oligosaccharide biosynthetic process"/>
    <property type="evidence" value="ECO:0000250"/>
    <property type="project" value="UniProtKB"/>
</dbReference>
<dbReference type="GO" id="GO:0016095">
    <property type="term" value="P:polyprenol catabolic process"/>
    <property type="evidence" value="ECO:0000250"/>
    <property type="project" value="UniProtKB"/>
</dbReference>
<dbReference type="FunFam" id="1.20.120.1630:FF:000021">
    <property type="entry name" value="Polyprenol reductase 1"/>
    <property type="match status" value="1"/>
</dbReference>
<dbReference type="Gene3D" id="1.20.120.1630">
    <property type="match status" value="1"/>
</dbReference>
<dbReference type="InterPro" id="IPR001104">
    <property type="entry name" value="3-oxo-5_a-steroid_4-DH_C"/>
</dbReference>
<dbReference type="InterPro" id="IPR039698">
    <property type="entry name" value="Dfg10/SRD5A3"/>
</dbReference>
<dbReference type="PANTHER" id="PTHR14624">
    <property type="entry name" value="DFG10 PROTEIN"/>
    <property type="match status" value="1"/>
</dbReference>
<dbReference type="PANTHER" id="PTHR14624:SF0">
    <property type="entry name" value="POLYPRENOL REDUCTASE"/>
    <property type="match status" value="1"/>
</dbReference>
<dbReference type="Pfam" id="PF02544">
    <property type="entry name" value="Steroid_dh"/>
    <property type="match status" value="1"/>
</dbReference>
<dbReference type="PROSITE" id="PS50244">
    <property type="entry name" value="S5A_REDUCTASE"/>
    <property type="match status" value="1"/>
</dbReference>
<name>SR5A3_DANRE</name>
<reference key="1">
    <citation type="journal article" date="2013" name="Nature">
        <title>The zebrafish reference genome sequence and its relationship to the human genome.</title>
        <authorList>
            <person name="Howe K."/>
            <person name="Clark M.D."/>
            <person name="Torroja C.F."/>
            <person name="Torrance J."/>
            <person name="Berthelot C."/>
            <person name="Muffato M."/>
            <person name="Collins J.E."/>
            <person name="Humphray S."/>
            <person name="McLaren K."/>
            <person name="Matthews L."/>
            <person name="McLaren S."/>
            <person name="Sealy I."/>
            <person name="Caccamo M."/>
            <person name="Churcher C."/>
            <person name="Scott C."/>
            <person name="Barrett J.C."/>
            <person name="Koch R."/>
            <person name="Rauch G.J."/>
            <person name="White S."/>
            <person name="Chow W."/>
            <person name="Kilian B."/>
            <person name="Quintais L.T."/>
            <person name="Guerra-Assuncao J.A."/>
            <person name="Zhou Y."/>
            <person name="Gu Y."/>
            <person name="Yen J."/>
            <person name="Vogel J.H."/>
            <person name="Eyre T."/>
            <person name="Redmond S."/>
            <person name="Banerjee R."/>
            <person name="Chi J."/>
            <person name="Fu B."/>
            <person name="Langley E."/>
            <person name="Maguire S.F."/>
            <person name="Laird G.K."/>
            <person name="Lloyd D."/>
            <person name="Kenyon E."/>
            <person name="Donaldson S."/>
            <person name="Sehra H."/>
            <person name="Almeida-King J."/>
            <person name="Loveland J."/>
            <person name="Trevanion S."/>
            <person name="Jones M."/>
            <person name="Quail M."/>
            <person name="Willey D."/>
            <person name="Hunt A."/>
            <person name="Burton J."/>
            <person name="Sims S."/>
            <person name="McLay K."/>
            <person name="Plumb B."/>
            <person name="Davis J."/>
            <person name="Clee C."/>
            <person name="Oliver K."/>
            <person name="Clark R."/>
            <person name="Riddle C."/>
            <person name="Elliot D."/>
            <person name="Threadgold G."/>
            <person name="Harden G."/>
            <person name="Ware D."/>
            <person name="Begum S."/>
            <person name="Mortimore B."/>
            <person name="Kerry G."/>
            <person name="Heath P."/>
            <person name="Phillimore B."/>
            <person name="Tracey A."/>
            <person name="Corby N."/>
            <person name="Dunn M."/>
            <person name="Johnson C."/>
            <person name="Wood J."/>
            <person name="Clark S."/>
            <person name="Pelan S."/>
            <person name="Griffiths G."/>
            <person name="Smith M."/>
            <person name="Glithero R."/>
            <person name="Howden P."/>
            <person name="Barker N."/>
            <person name="Lloyd C."/>
            <person name="Stevens C."/>
            <person name="Harley J."/>
            <person name="Holt K."/>
            <person name="Panagiotidis G."/>
            <person name="Lovell J."/>
            <person name="Beasley H."/>
            <person name="Henderson C."/>
            <person name="Gordon D."/>
            <person name="Auger K."/>
            <person name="Wright D."/>
            <person name="Collins J."/>
            <person name="Raisen C."/>
            <person name="Dyer L."/>
            <person name="Leung K."/>
            <person name="Robertson L."/>
            <person name="Ambridge K."/>
            <person name="Leongamornlert D."/>
            <person name="McGuire S."/>
            <person name="Gilderthorp R."/>
            <person name="Griffiths C."/>
            <person name="Manthravadi D."/>
            <person name="Nichol S."/>
            <person name="Barker G."/>
            <person name="Whitehead S."/>
            <person name="Kay M."/>
            <person name="Brown J."/>
            <person name="Murnane C."/>
            <person name="Gray E."/>
            <person name="Humphries M."/>
            <person name="Sycamore N."/>
            <person name="Barker D."/>
            <person name="Saunders D."/>
            <person name="Wallis J."/>
            <person name="Babbage A."/>
            <person name="Hammond S."/>
            <person name="Mashreghi-Mohammadi M."/>
            <person name="Barr L."/>
            <person name="Martin S."/>
            <person name="Wray P."/>
            <person name="Ellington A."/>
            <person name="Matthews N."/>
            <person name="Ellwood M."/>
            <person name="Woodmansey R."/>
            <person name="Clark G."/>
            <person name="Cooper J."/>
            <person name="Tromans A."/>
            <person name="Grafham D."/>
            <person name="Skuce C."/>
            <person name="Pandian R."/>
            <person name="Andrews R."/>
            <person name="Harrison E."/>
            <person name="Kimberley A."/>
            <person name="Garnett J."/>
            <person name="Fosker N."/>
            <person name="Hall R."/>
            <person name="Garner P."/>
            <person name="Kelly D."/>
            <person name="Bird C."/>
            <person name="Palmer S."/>
            <person name="Gehring I."/>
            <person name="Berger A."/>
            <person name="Dooley C.M."/>
            <person name="Ersan-Urun Z."/>
            <person name="Eser C."/>
            <person name="Geiger H."/>
            <person name="Geisler M."/>
            <person name="Karotki L."/>
            <person name="Kirn A."/>
            <person name="Konantz J."/>
            <person name="Konantz M."/>
            <person name="Oberlander M."/>
            <person name="Rudolph-Geiger S."/>
            <person name="Teucke M."/>
            <person name="Lanz C."/>
            <person name="Raddatz G."/>
            <person name="Osoegawa K."/>
            <person name="Zhu B."/>
            <person name="Rapp A."/>
            <person name="Widaa S."/>
            <person name="Langford C."/>
            <person name="Yang F."/>
            <person name="Schuster S.C."/>
            <person name="Carter N.P."/>
            <person name="Harrow J."/>
            <person name="Ning Z."/>
            <person name="Herrero J."/>
            <person name="Searle S.M."/>
            <person name="Enright A."/>
            <person name="Geisler R."/>
            <person name="Plasterk R.H."/>
            <person name="Lee C."/>
            <person name="Westerfield M."/>
            <person name="de Jong P.J."/>
            <person name="Zon L.I."/>
            <person name="Postlethwait J.H."/>
            <person name="Nusslein-Volhard C."/>
            <person name="Hubbard T.J."/>
            <person name="Roest Crollius H."/>
            <person name="Rogers J."/>
            <person name="Stemple D.L."/>
        </authorList>
    </citation>
    <scope>NUCLEOTIDE SEQUENCE [LARGE SCALE GENOMIC DNA]</scope>
    <source>
        <strain>Tuebingen</strain>
    </source>
</reference>
<reference key="2">
    <citation type="submission" date="2007-03" db="EMBL/GenBank/DDBJ databases">
        <authorList>
            <consortium name="NIH - Zebrafish Gene Collection (ZGC) project"/>
        </authorList>
    </citation>
    <scope>NUCLEOTIDE SEQUENCE [LARGE SCALE MRNA]</scope>
    <source>
        <tissue>Embryo</tissue>
    </source>
</reference>
<proteinExistence type="evidence at transcript level"/>